<evidence type="ECO:0000250" key="1"/>
<evidence type="ECO:0000255" key="2">
    <source>
        <dbReference type="HAMAP-Rule" id="MF_00047"/>
    </source>
</evidence>
<accession>B2UT94</accession>
<dbReference type="EC" id="6.3.2.4" evidence="2"/>
<dbReference type="EMBL" id="CP001072">
    <property type="protein sequence ID" value="ACD48076.1"/>
    <property type="molecule type" value="Genomic_DNA"/>
</dbReference>
<dbReference type="RefSeq" id="WP_000393622.1">
    <property type="nucleotide sequence ID" value="NC_010698.2"/>
</dbReference>
<dbReference type="SMR" id="B2UT94"/>
<dbReference type="KEGG" id="hps:HPSH_03150"/>
<dbReference type="HOGENOM" id="CLU_039268_0_2_7"/>
<dbReference type="UniPathway" id="UPA00219"/>
<dbReference type="GO" id="GO:0005737">
    <property type="term" value="C:cytoplasm"/>
    <property type="evidence" value="ECO:0007669"/>
    <property type="project" value="UniProtKB-SubCell"/>
</dbReference>
<dbReference type="GO" id="GO:0005524">
    <property type="term" value="F:ATP binding"/>
    <property type="evidence" value="ECO:0007669"/>
    <property type="project" value="UniProtKB-KW"/>
</dbReference>
<dbReference type="GO" id="GO:0008716">
    <property type="term" value="F:D-alanine-D-alanine ligase activity"/>
    <property type="evidence" value="ECO:0007669"/>
    <property type="project" value="UniProtKB-UniRule"/>
</dbReference>
<dbReference type="GO" id="GO:0046872">
    <property type="term" value="F:metal ion binding"/>
    <property type="evidence" value="ECO:0007669"/>
    <property type="project" value="UniProtKB-KW"/>
</dbReference>
<dbReference type="GO" id="GO:0071555">
    <property type="term" value="P:cell wall organization"/>
    <property type="evidence" value="ECO:0007669"/>
    <property type="project" value="UniProtKB-KW"/>
</dbReference>
<dbReference type="GO" id="GO:0009252">
    <property type="term" value="P:peptidoglycan biosynthetic process"/>
    <property type="evidence" value="ECO:0007669"/>
    <property type="project" value="UniProtKB-UniRule"/>
</dbReference>
<dbReference type="GO" id="GO:0008360">
    <property type="term" value="P:regulation of cell shape"/>
    <property type="evidence" value="ECO:0007669"/>
    <property type="project" value="UniProtKB-KW"/>
</dbReference>
<dbReference type="Gene3D" id="3.40.50.20">
    <property type="match status" value="1"/>
</dbReference>
<dbReference type="Gene3D" id="3.30.1490.20">
    <property type="entry name" value="ATP-grasp fold, A domain"/>
    <property type="match status" value="1"/>
</dbReference>
<dbReference type="Gene3D" id="3.30.470.20">
    <property type="entry name" value="ATP-grasp fold, B domain"/>
    <property type="match status" value="1"/>
</dbReference>
<dbReference type="HAMAP" id="MF_00047">
    <property type="entry name" value="Dala_Dala_lig"/>
    <property type="match status" value="1"/>
</dbReference>
<dbReference type="InterPro" id="IPR011761">
    <property type="entry name" value="ATP-grasp"/>
</dbReference>
<dbReference type="InterPro" id="IPR013815">
    <property type="entry name" value="ATP_grasp_subdomain_1"/>
</dbReference>
<dbReference type="InterPro" id="IPR000291">
    <property type="entry name" value="D-Ala_lig_Van_CS"/>
</dbReference>
<dbReference type="InterPro" id="IPR005905">
    <property type="entry name" value="D_ala_D_ala"/>
</dbReference>
<dbReference type="InterPro" id="IPR011095">
    <property type="entry name" value="Dala_Dala_lig_C"/>
</dbReference>
<dbReference type="InterPro" id="IPR011127">
    <property type="entry name" value="Dala_Dala_lig_N"/>
</dbReference>
<dbReference type="InterPro" id="IPR016185">
    <property type="entry name" value="PreATP-grasp_dom_sf"/>
</dbReference>
<dbReference type="NCBIfam" id="TIGR01205">
    <property type="entry name" value="D_ala_D_alaTIGR"/>
    <property type="match status" value="1"/>
</dbReference>
<dbReference type="NCBIfam" id="NF002527">
    <property type="entry name" value="PRK01966.1-3"/>
    <property type="match status" value="1"/>
</dbReference>
<dbReference type="PANTHER" id="PTHR23132">
    <property type="entry name" value="D-ALANINE--D-ALANINE LIGASE"/>
    <property type="match status" value="1"/>
</dbReference>
<dbReference type="PANTHER" id="PTHR23132:SF23">
    <property type="entry name" value="D-ALANINE--D-ALANINE LIGASE B"/>
    <property type="match status" value="1"/>
</dbReference>
<dbReference type="Pfam" id="PF07478">
    <property type="entry name" value="Dala_Dala_lig_C"/>
    <property type="match status" value="1"/>
</dbReference>
<dbReference type="Pfam" id="PF01820">
    <property type="entry name" value="Dala_Dala_lig_N"/>
    <property type="match status" value="1"/>
</dbReference>
<dbReference type="SUPFAM" id="SSF56059">
    <property type="entry name" value="Glutathione synthetase ATP-binding domain-like"/>
    <property type="match status" value="1"/>
</dbReference>
<dbReference type="SUPFAM" id="SSF52440">
    <property type="entry name" value="PreATP-grasp domain"/>
    <property type="match status" value="1"/>
</dbReference>
<dbReference type="PROSITE" id="PS50975">
    <property type="entry name" value="ATP_GRASP"/>
    <property type="match status" value="1"/>
</dbReference>
<dbReference type="PROSITE" id="PS00843">
    <property type="entry name" value="DALA_DALA_LIGASE_1"/>
    <property type="match status" value="1"/>
</dbReference>
<dbReference type="PROSITE" id="PS00844">
    <property type="entry name" value="DALA_DALA_LIGASE_2"/>
    <property type="match status" value="1"/>
</dbReference>
<feature type="chain" id="PRO_1000091186" description="D-alanine--D-alanine ligase">
    <location>
        <begin position="1"/>
        <end position="347"/>
    </location>
</feature>
<feature type="domain" description="ATP-grasp" evidence="2">
    <location>
        <begin position="134"/>
        <end position="332"/>
    </location>
</feature>
<feature type="binding site" evidence="2">
    <location>
        <begin position="161"/>
        <end position="216"/>
    </location>
    <ligand>
        <name>ATP</name>
        <dbReference type="ChEBI" id="CHEBI:30616"/>
    </ligand>
</feature>
<feature type="binding site" evidence="2">
    <location>
        <position position="288"/>
    </location>
    <ligand>
        <name>Mg(2+)</name>
        <dbReference type="ChEBI" id="CHEBI:18420"/>
        <label>1</label>
    </ligand>
</feature>
<feature type="binding site" evidence="2">
    <location>
        <position position="300"/>
    </location>
    <ligand>
        <name>Mg(2+)</name>
        <dbReference type="ChEBI" id="CHEBI:18420"/>
        <label>1</label>
    </ligand>
</feature>
<feature type="binding site" evidence="2">
    <location>
        <position position="300"/>
    </location>
    <ligand>
        <name>Mg(2+)</name>
        <dbReference type="ChEBI" id="CHEBI:18420"/>
        <label>2</label>
    </ligand>
</feature>
<feature type="binding site" evidence="2">
    <location>
        <position position="302"/>
    </location>
    <ligand>
        <name>Mg(2+)</name>
        <dbReference type="ChEBI" id="CHEBI:18420"/>
        <label>2</label>
    </ligand>
</feature>
<proteinExistence type="inferred from homology"/>
<gene>
    <name evidence="2" type="primary">ddl</name>
    <name type="ordered locus">HPSH_03150</name>
</gene>
<name>DDL_HELPS</name>
<reference key="1">
    <citation type="submission" date="2008-05" db="EMBL/GenBank/DDBJ databases">
        <title>Genome sequence of Helicobacter pylori from the remote Amazon: traces of Asian ancestry of the first Americans.</title>
        <authorList>
            <person name="Kersulyte D."/>
            <person name="Kalia A."/>
            <person name="Gilman R.H."/>
            <person name="Berg D.E."/>
        </authorList>
    </citation>
    <scope>NUCLEOTIDE SEQUENCE [LARGE SCALE GENOMIC DNA]</scope>
    <source>
        <strain>Shi470</strain>
    </source>
</reference>
<sequence>MEFCVLFGGASFEHEISIVSAIALKEALKGRIKYFIFLDENHHFYLIEESNMHSKYFAQIKEKKLPPLILTCNGLLKNSFLGAKIIELPLVINLVHGGDGEDGKLASLLEFYRIAFIGPGIEASVLSYNKYLTKLYAKDLGVKALDHVLLNEKNRANALNLIGFNFPFIIKPSNAGSSLGVSVVKEEKELIYALDGAFEYSKEILIEPFIQGVKEYNLAGCKIKKDFCFSYVEEPNKQEFLDFKQKYLDFSRNKAPKANLSNALEEQLKENFKKLYNDLFDGALIRCDFFVIENEVYLNEINPIPGSLANYLFDDFKTTLENLAQSLPKTPKIQIKNSYLLQIQKNK</sequence>
<protein>
    <recommendedName>
        <fullName evidence="2">D-alanine--D-alanine ligase</fullName>
        <ecNumber evidence="2">6.3.2.4</ecNumber>
    </recommendedName>
    <alternativeName>
        <fullName evidence="2">D-Ala-D-Ala ligase</fullName>
    </alternativeName>
    <alternativeName>
        <fullName evidence="2">D-alanylalanine synthetase</fullName>
    </alternativeName>
</protein>
<comment type="function">
    <text evidence="2">Cell wall formation.</text>
</comment>
<comment type="catalytic activity">
    <reaction evidence="2">
        <text>2 D-alanine + ATP = D-alanyl-D-alanine + ADP + phosphate + H(+)</text>
        <dbReference type="Rhea" id="RHEA:11224"/>
        <dbReference type="ChEBI" id="CHEBI:15378"/>
        <dbReference type="ChEBI" id="CHEBI:30616"/>
        <dbReference type="ChEBI" id="CHEBI:43474"/>
        <dbReference type="ChEBI" id="CHEBI:57416"/>
        <dbReference type="ChEBI" id="CHEBI:57822"/>
        <dbReference type="ChEBI" id="CHEBI:456216"/>
        <dbReference type="EC" id="6.3.2.4"/>
    </reaction>
</comment>
<comment type="cofactor">
    <cofactor evidence="1">
        <name>Mg(2+)</name>
        <dbReference type="ChEBI" id="CHEBI:18420"/>
    </cofactor>
    <cofactor evidence="1">
        <name>Mn(2+)</name>
        <dbReference type="ChEBI" id="CHEBI:29035"/>
    </cofactor>
    <text evidence="1">Binds 2 magnesium or manganese ions per subunit.</text>
</comment>
<comment type="pathway">
    <text evidence="2">Cell wall biogenesis; peptidoglycan biosynthesis.</text>
</comment>
<comment type="subcellular location">
    <subcellularLocation>
        <location evidence="2">Cytoplasm</location>
    </subcellularLocation>
</comment>
<comment type="similarity">
    <text evidence="2">Belongs to the D-alanine--D-alanine ligase family.</text>
</comment>
<organism>
    <name type="scientific">Helicobacter pylori (strain Shi470)</name>
    <dbReference type="NCBI Taxonomy" id="512562"/>
    <lineage>
        <taxon>Bacteria</taxon>
        <taxon>Pseudomonadati</taxon>
        <taxon>Campylobacterota</taxon>
        <taxon>Epsilonproteobacteria</taxon>
        <taxon>Campylobacterales</taxon>
        <taxon>Helicobacteraceae</taxon>
        <taxon>Helicobacter</taxon>
    </lineage>
</organism>
<keyword id="KW-0067">ATP-binding</keyword>
<keyword id="KW-0133">Cell shape</keyword>
<keyword id="KW-0961">Cell wall biogenesis/degradation</keyword>
<keyword id="KW-0963">Cytoplasm</keyword>
<keyword id="KW-0436">Ligase</keyword>
<keyword id="KW-0460">Magnesium</keyword>
<keyword id="KW-0464">Manganese</keyword>
<keyword id="KW-0479">Metal-binding</keyword>
<keyword id="KW-0547">Nucleotide-binding</keyword>
<keyword id="KW-0573">Peptidoglycan synthesis</keyword>